<sequence length="503" mass="54880">MEFSVKSGSPEKQRSACIVVGVFEPRRLSPIAEQLDKISDGYISALLRRGELEGKPGQTLLLHHVPNVLSERILLIGCGKERELDERQYKQVIQKTINTLNDTGSMEAVCFLTELHVKGRNNYWKVRQAVETAKETLYSFDQLKTNKSEPRRPLRKMVFNVPTRRELTSGERAIQHGLAIAAGIKAAKDLGNMPPNICNAAYLASQARQLADSYSKNVITRVIGEQQMKELGMHSYLAVGQGSQNESLMSVIEYKGNASEDARPIVLVGKGLTFDSGGISIKPSEGMDEMKYDMCGAAAVYGVMRMVAELQLPINVIGVLAGCENMPGGRAYRPGDVLTTMSGQTVEVLNTDAEGRLVLCDVLTYVERFEPEAVIDVATLTGACVIALGHHITGLMANHNPLAHELIAASEQSGDRAWRLPLGDEYQEQLESNFADMANIGGRPGGAITAGCFLSRFTRKYNWAHLDIAGTAWRSGKAKGATGRPVALLAQFLLNRAGFNGEE</sequence>
<reference key="1">
    <citation type="journal article" date="2009" name="PLoS Genet.">
        <title>Organised genome dynamics in the Escherichia coli species results in highly diverse adaptive paths.</title>
        <authorList>
            <person name="Touchon M."/>
            <person name="Hoede C."/>
            <person name="Tenaillon O."/>
            <person name="Barbe V."/>
            <person name="Baeriswyl S."/>
            <person name="Bidet P."/>
            <person name="Bingen E."/>
            <person name="Bonacorsi S."/>
            <person name="Bouchier C."/>
            <person name="Bouvet O."/>
            <person name="Calteau A."/>
            <person name="Chiapello H."/>
            <person name="Clermont O."/>
            <person name="Cruveiller S."/>
            <person name="Danchin A."/>
            <person name="Diard M."/>
            <person name="Dossat C."/>
            <person name="Karoui M.E."/>
            <person name="Frapy E."/>
            <person name="Garry L."/>
            <person name="Ghigo J.M."/>
            <person name="Gilles A.M."/>
            <person name="Johnson J."/>
            <person name="Le Bouguenec C."/>
            <person name="Lescat M."/>
            <person name="Mangenot S."/>
            <person name="Martinez-Jehanne V."/>
            <person name="Matic I."/>
            <person name="Nassif X."/>
            <person name="Oztas S."/>
            <person name="Petit M.A."/>
            <person name="Pichon C."/>
            <person name="Rouy Z."/>
            <person name="Ruf C.S."/>
            <person name="Schneider D."/>
            <person name="Tourret J."/>
            <person name="Vacherie B."/>
            <person name="Vallenet D."/>
            <person name="Medigue C."/>
            <person name="Rocha E.P.C."/>
            <person name="Denamur E."/>
        </authorList>
    </citation>
    <scope>NUCLEOTIDE SEQUENCE [LARGE SCALE GENOMIC DNA]</scope>
    <source>
        <strain>ED1a</strain>
    </source>
</reference>
<accession>B7MSZ3</accession>
<proteinExistence type="inferred from homology"/>
<feature type="chain" id="PRO_1000192714" description="Probable cytosol aminopeptidase">
    <location>
        <begin position="1"/>
        <end position="503"/>
    </location>
</feature>
<feature type="active site" evidence="1">
    <location>
        <position position="282"/>
    </location>
</feature>
<feature type="active site" evidence="1">
    <location>
        <position position="356"/>
    </location>
</feature>
<feature type="binding site" evidence="1">
    <location>
        <position position="270"/>
    </location>
    <ligand>
        <name>Mn(2+)</name>
        <dbReference type="ChEBI" id="CHEBI:29035"/>
        <label>2</label>
    </ligand>
</feature>
<feature type="binding site" evidence="1">
    <location>
        <position position="275"/>
    </location>
    <ligand>
        <name>Mn(2+)</name>
        <dbReference type="ChEBI" id="CHEBI:29035"/>
        <label>1</label>
    </ligand>
</feature>
<feature type="binding site" evidence="1">
    <location>
        <position position="275"/>
    </location>
    <ligand>
        <name>Mn(2+)</name>
        <dbReference type="ChEBI" id="CHEBI:29035"/>
        <label>2</label>
    </ligand>
</feature>
<feature type="binding site" evidence="1">
    <location>
        <position position="293"/>
    </location>
    <ligand>
        <name>Mn(2+)</name>
        <dbReference type="ChEBI" id="CHEBI:29035"/>
        <label>2</label>
    </ligand>
</feature>
<feature type="binding site" evidence="1">
    <location>
        <position position="352"/>
    </location>
    <ligand>
        <name>Mn(2+)</name>
        <dbReference type="ChEBI" id="CHEBI:29035"/>
        <label>1</label>
    </ligand>
</feature>
<feature type="binding site" evidence="1">
    <location>
        <position position="354"/>
    </location>
    <ligand>
        <name>Mn(2+)</name>
        <dbReference type="ChEBI" id="CHEBI:29035"/>
        <label>1</label>
    </ligand>
</feature>
<feature type="binding site" evidence="1">
    <location>
        <position position="354"/>
    </location>
    <ligand>
        <name>Mn(2+)</name>
        <dbReference type="ChEBI" id="CHEBI:29035"/>
        <label>2</label>
    </ligand>
</feature>
<dbReference type="EC" id="3.4.11.1" evidence="1"/>
<dbReference type="EC" id="3.4.11.10" evidence="1"/>
<dbReference type="EMBL" id="CU928162">
    <property type="protein sequence ID" value="CAR11068.1"/>
    <property type="molecule type" value="Genomic_DNA"/>
</dbReference>
<dbReference type="RefSeq" id="WP_000397144.1">
    <property type="nucleotide sequence ID" value="NC_011745.1"/>
</dbReference>
<dbReference type="SMR" id="B7MSZ3"/>
<dbReference type="MEROPS" id="M17.003"/>
<dbReference type="GeneID" id="93777558"/>
<dbReference type="KEGG" id="ecq:ECED1_5113"/>
<dbReference type="HOGENOM" id="CLU_013734_2_2_6"/>
<dbReference type="Proteomes" id="UP000000748">
    <property type="component" value="Chromosome"/>
</dbReference>
<dbReference type="GO" id="GO:0005737">
    <property type="term" value="C:cytoplasm"/>
    <property type="evidence" value="ECO:0007669"/>
    <property type="project" value="UniProtKB-SubCell"/>
</dbReference>
<dbReference type="GO" id="GO:0030145">
    <property type="term" value="F:manganese ion binding"/>
    <property type="evidence" value="ECO:0007669"/>
    <property type="project" value="UniProtKB-UniRule"/>
</dbReference>
<dbReference type="GO" id="GO:0070006">
    <property type="term" value="F:metalloaminopeptidase activity"/>
    <property type="evidence" value="ECO:0007669"/>
    <property type="project" value="InterPro"/>
</dbReference>
<dbReference type="GO" id="GO:0006508">
    <property type="term" value="P:proteolysis"/>
    <property type="evidence" value="ECO:0007669"/>
    <property type="project" value="UniProtKB-KW"/>
</dbReference>
<dbReference type="CDD" id="cd00433">
    <property type="entry name" value="Peptidase_M17"/>
    <property type="match status" value="1"/>
</dbReference>
<dbReference type="FunFam" id="3.40.220.10:FF:000001">
    <property type="entry name" value="Probable cytosol aminopeptidase"/>
    <property type="match status" value="1"/>
</dbReference>
<dbReference type="FunFam" id="3.40.630.10:FF:000004">
    <property type="entry name" value="Probable cytosol aminopeptidase"/>
    <property type="match status" value="1"/>
</dbReference>
<dbReference type="Gene3D" id="3.40.220.10">
    <property type="entry name" value="Leucine Aminopeptidase, subunit E, domain 1"/>
    <property type="match status" value="1"/>
</dbReference>
<dbReference type="Gene3D" id="3.40.630.10">
    <property type="entry name" value="Zn peptidases"/>
    <property type="match status" value="1"/>
</dbReference>
<dbReference type="HAMAP" id="MF_00181">
    <property type="entry name" value="Cytosol_peptidase_M17"/>
    <property type="match status" value="1"/>
</dbReference>
<dbReference type="InterPro" id="IPR011356">
    <property type="entry name" value="Leucine_aapep/pepB"/>
</dbReference>
<dbReference type="InterPro" id="IPR043472">
    <property type="entry name" value="Macro_dom-like"/>
</dbReference>
<dbReference type="InterPro" id="IPR000819">
    <property type="entry name" value="Peptidase_M17_C"/>
</dbReference>
<dbReference type="InterPro" id="IPR023042">
    <property type="entry name" value="Peptidase_M17_leu_NH2_pept"/>
</dbReference>
<dbReference type="InterPro" id="IPR008283">
    <property type="entry name" value="Peptidase_M17_N"/>
</dbReference>
<dbReference type="NCBIfam" id="NF002072">
    <property type="entry name" value="PRK00913.1-1"/>
    <property type="match status" value="1"/>
</dbReference>
<dbReference type="NCBIfam" id="NF002073">
    <property type="entry name" value="PRK00913.1-2"/>
    <property type="match status" value="1"/>
</dbReference>
<dbReference type="NCBIfam" id="NF002074">
    <property type="entry name" value="PRK00913.1-4"/>
    <property type="match status" value="1"/>
</dbReference>
<dbReference type="PANTHER" id="PTHR11963:SF23">
    <property type="entry name" value="CYTOSOL AMINOPEPTIDASE"/>
    <property type="match status" value="1"/>
</dbReference>
<dbReference type="PANTHER" id="PTHR11963">
    <property type="entry name" value="LEUCINE AMINOPEPTIDASE-RELATED"/>
    <property type="match status" value="1"/>
</dbReference>
<dbReference type="Pfam" id="PF00883">
    <property type="entry name" value="Peptidase_M17"/>
    <property type="match status" value="1"/>
</dbReference>
<dbReference type="Pfam" id="PF02789">
    <property type="entry name" value="Peptidase_M17_N"/>
    <property type="match status" value="1"/>
</dbReference>
<dbReference type="PRINTS" id="PR00481">
    <property type="entry name" value="LAMNOPPTDASE"/>
</dbReference>
<dbReference type="SUPFAM" id="SSF52949">
    <property type="entry name" value="Macro domain-like"/>
    <property type="match status" value="1"/>
</dbReference>
<dbReference type="SUPFAM" id="SSF53187">
    <property type="entry name" value="Zn-dependent exopeptidases"/>
    <property type="match status" value="1"/>
</dbReference>
<dbReference type="PROSITE" id="PS00631">
    <property type="entry name" value="CYTOSOL_AP"/>
    <property type="match status" value="1"/>
</dbReference>
<comment type="function">
    <text evidence="1">Presumably involved in the processing and regular turnover of intracellular proteins. Catalyzes the removal of unsubstituted N-terminal amino acids from various peptides.</text>
</comment>
<comment type="catalytic activity">
    <reaction evidence="1">
        <text>Release of an N-terminal amino acid, Xaa-|-Yaa-, in which Xaa is preferably Leu, but may be other amino acids including Pro although not Arg or Lys, and Yaa may be Pro. Amino acid amides and methyl esters are also readily hydrolyzed, but rates on arylamides are exceedingly low.</text>
        <dbReference type="EC" id="3.4.11.1"/>
    </reaction>
</comment>
<comment type="catalytic activity">
    <reaction evidence="1">
        <text>Release of an N-terminal amino acid, preferentially leucine, but not glutamic or aspartic acids.</text>
        <dbReference type="EC" id="3.4.11.10"/>
    </reaction>
</comment>
<comment type="cofactor">
    <cofactor evidence="1">
        <name>Mn(2+)</name>
        <dbReference type="ChEBI" id="CHEBI:29035"/>
    </cofactor>
    <text evidence="1">Binds 2 manganese ions per subunit.</text>
</comment>
<comment type="subcellular location">
    <subcellularLocation>
        <location evidence="1">Cytoplasm</location>
    </subcellularLocation>
</comment>
<comment type="similarity">
    <text evidence="1">Belongs to the peptidase M17 family.</text>
</comment>
<organism>
    <name type="scientific">Escherichia coli O81 (strain ED1a)</name>
    <dbReference type="NCBI Taxonomy" id="585397"/>
    <lineage>
        <taxon>Bacteria</taxon>
        <taxon>Pseudomonadati</taxon>
        <taxon>Pseudomonadota</taxon>
        <taxon>Gammaproteobacteria</taxon>
        <taxon>Enterobacterales</taxon>
        <taxon>Enterobacteriaceae</taxon>
        <taxon>Escherichia</taxon>
    </lineage>
</organism>
<gene>
    <name evidence="1" type="primary">pepA</name>
    <name type="ordered locus">ECED1_5113</name>
</gene>
<evidence type="ECO:0000255" key="1">
    <source>
        <dbReference type="HAMAP-Rule" id="MF_00181"/>
    </source>
</evidence>
<keyword id="KW-0031">Aminopeptidase</keyword>
<keyword id="KW-0963">Cytoplasm</keyword>
<keyword id="KW-0378">Hydrolase</keyword>
<keyword id="KW-0464">Manganese</keyword>
<keyword id="KW-0479">Metal-binding</keyword>
<keyword id="KW-0645">Protease</keyword>
<protein>
    <recommendedName>
        <fullName evidence="1">Probable cytosol aminopeptidase</fullName>
        <ecNumber evidence="1">3.4.11.1</ecNumber>
    </recommendedName>
    <alternativeName>
        <fullName evidence="1">Leucine aminopeptidase</fullName>
        <shortName evidence="1">LAP</shortName>
        <ecNumber evidence="1">3.4.11.10</ecNumber>
    </alternativeName>
    <alternativeName>
        <fullName evidence="1">Leucyl aminopeptidase</fullName>
    </alternativeName>
</protein>
<name>AMPA_ECO81</name>